<organism>
    <name type="scientific">Erythrobacter litoralis (strain HTCC2594)</name>
    <dbReference type="NCBI Taxonomy" id="314225"/>
    <lineage>
        <taxon>Bacteria</taxon>
        <taxon>Pseudomonadati</taxon>
        <taxon>Pseudomonadota</taxon>
        <taxon>Alphaproteobacteria</taxon>
        <taxon>Sphingomonadales</taxon>
        <taxon>Erythrobacteraceae</taxon>
        <taxon>Erythrobacter/Porphyrobacter group</taxon>
        <taxon>Erythrobacter</taxon>
    </lineage>
</organism>
<feature type="chain" id="PRO_0000318223" description="Protein-export protein SecB">
    <location>
        <begin position="1"/>
        <end position="178"/>
    </location>
</feature>
<feature type="region of interest" description="Disordered" evidence="2">
    <location>
        <begin position="1"/>
        <end position="25"/>
    </location>
</feature>
<feature type="compositionally biased region" description="Acidic residues" evidence="2">
    <location>
        <begin position="1"/>
        <end position="13"/>
    </location>
</feature>
<evidence type="ECO:0000255" key="1">
    <source>
        <dbReference type="HAMAP-Rule" id="MF_00821"/>
    </source>
</evidence>
<evidence type="ECO:0000256" key="2">
    <source>
        <dbReference type="SAM" id="MobiDB-lite"/>
    </source>
</evidence>
<evidence type="ECO:0000305" key="3"/>
<reference key="1">
    <citation type="journal article" date="2009" name="J. Bacteriol.">
        <title>Complete genome sequence of Erythrobacter litoralis HTCC2594.</title>
        <authorList>
            <person name="Oh H.M."/>
            <person name="Giovannoni S.J."/>
            <person name="Ferriera S."/>
            <person name="Johnson J."/>
            <person name="Cho J.C."/>
        </authorList>
    </citation>
    <scope>NUCLEOTIDE SEQUENCE [LARGE SCALE GENOMIC DNA]</scope>
    <source>
        <strain>HTCC2594</strain>
    </source>
</reference>
<sequence length="178" mass="19419">MADEGDVLTDLDMDPAAGGNGADNRPTAGFITQYIKDMSVENPNAPGVYQWQEQPQIDLQFNIGANAVNEEVTEVELKINVEAKTDQGALYIIELVYAGLVGIRNLGDDQAHMFVYAEAPRILFPFARRVIADATRDLGFQPLMLDPIDFNGLYMQRLQQKAAEEAQGEGGETPAGDA</sequence>
<keyword id="KW-0143">Chaperone</keyword>
<keyword id="KW-0963">Cytoplasm</keyword>
<keyword id="KW-0653">Protein transport</keyword>
<keyword id="KW-1185">Reference proteome</keyword>
<keyword id="KW-0811">Translocation</keyword>
<keyword id="KW-0813">Transport</keyword>
<accession>Q2N7Z9</accession>
<name>SECB_ERYLH</name>
<dbReference type="EMBL" id="CP000157">
    <property type="protein sequence ID" value="ABC64192.1"/>
    <property type="status" value="ALT_INIT"/>
    <property type="molecule type" value="Genomic_DNA"/>
</dbReference>
<dbReference type="RefSeq" id="WP_041685265.1">
    <property type="nucleotide sequence ID" value="NC_007722.1"/>
</dbReference>
<dbReference type="SMR" id="Q2N7Z9"/>
<dbReference type="STRING" id="314225.ELI_10500"/>
<dbReference type="KEGG" id="eli:ELI_10500"/>
<dbReference type="eggNOG" id="COG1952">
    <property type="taxonomic scope" value="Bacteria"/>
</dbReference>
<dbReference type="HOGENOM" id="CLU_111574_0_0_5"/>
<dbReference type="OrthoDB" id="9795145at2"/>
<dbReference type="Proteomes" id="UP000008808">
    <property type="component" value="Chromosome"/>
</dbReference>
<dbReference type="GO" id="GO:0005737">
    <property type="term" value="C:cytoplasm"/>
    <property type="evidence" value="ECO:0007669"/>
    <property type="project" value="UniProtKB-SubCell"/>
</dbReference>
<dbReference type="GO" id="GO:0051082">
    <property type="term" value="F:unfolded protein binding"/>
    <property type="evidence" value="ECO:0007669"/>
    <property type="project" value="InterPro"/>
</dbReference>
<dbReference type="GO" id="GO:0006457">
    <property type="term" value="P:protein folding"/>
    <property type="evidence" value="ECO:0007669"/>
    <property type="project" value="UniProtKB-UniRule"/>
</dbReference>
<dbReference type="GO" id="GO:0051262">
    <property type="term" value="P:protein tetramerization"/>
    <property type="evidence" value="ECO:0007669"/>
    <property type="project" value="InterPro"/>
</dbReference>
<dbReference type="GO" id="GO:0015031">
    <property type="term" value="P:protein transport"/>
    <property type="evidence" value="ECO:0007669"/>
    <property type="project" value="UniProtKB-UniRule"/>
</dbReference>
<dbReference type="Gene3D" id="3.10.420.10">
    <property type="entry name" value="SecB-like"/>
    <property type="match status" value="1"/>
</dbReference>
<dbReference type="HAMAP" id="MF_00821">
    <property type="entry name" value="SecB"/>
    <property type="match status" value="1"/>
</dbReference>
<dbReference type="InterPro" id="IPR003708">
    <property type="entry name" value="SecB"/>
</dbReference>
<dbReference type="InterPro" id="IPR035958">
    <property type="entry name" value="SecB-like_sf"/>
</dbReference>
<dbReference type="NCBIfam" id="NF004392">
    <property type="entry name" value="PRK05751.1-3"/>
    <property type="match status" value="1"/>
</dbReference>
<dbReference type="NCBIfam" id="TIGR00809">
    <property type="entry name" value="secB"/>
    <property type="match status" value="1"/>
</dbReference>
<dbReference type="PANTHER" id="PTHR36918">
    <property type="match status" value="1"/>
</dbReference>
<dbReference type="PANTHER" id="PTHR36918:SF1">
    <property type="entry name" value="PROTEIN-EXPORT PROTEIN SECB"/>
    <property type="match status" value="1"/>
</dbReference>
<dbReference type="Pfam" id="PF02556">
    <property type="entry name" value="SecB"/>
    <property type="match status" value="1"/>
</dbReference>
<dbReference type="PRINTS" id="PR01594">
    <property type="entry name" value="SECBCHAPRONE"/>
</dbReference>
<dbReference type="SUPFAM" id="SSF54611">
    <property type="entry name" value="SecB-like"/>
    <property type="match status" value="1"/>
</dbReference>
<protein>
    <recommendedName>
        <fullName evidence="1">Protein-export protein SecB</fullName>
    </recommendedName>
</protein>
<gene>
    <name evidence="1" type="primary">secB</name>
    <name type="ordered locus">ELI_10500</name>
</gene>
<proteinExistence type="inferred from homology"/>
<comment type="function">
    <text evidence="1">One of the proteins required for the normal export of preproteins out of the cell cytoplasm. It is a molecular chaperone that binds to a subset of precursor proteins, maintaining them in a translocation-competent state. It also specifically binds to its receptor SecA.</text>
</comment>
<comment type="subunit">
    <text evidence="1">Homotetramer, a dimer of dimers. One homotetramer interacts with 1 SecA dimer.</text>
</comment>
<comment type="subcellular location">
    <subcellularLocation>
        <location evidence="1">Cytoplasm</location>
    </subcellularLocation>
</comment>
<comment type="similarity">
    <text evidence="1">Belongs to the SecB family.</text>
</comment>
<comment type="sequence caution" evidence="3">
    <conflict type="erroneous initiation">
        <sequence resource="EMBL-CDS" id="ABC64192"/>
    </conflict>
</comment>